<proteinExistence type="inferred from homology"/>
<keyword id="KW-0240">DNA-directed RNA polymerase</keyword>
<keyword id="KW-0548">Nucleotidyltransferase</keyword>
<keyword id="KW-1185">Reference proteome</keyword>
<keyword id="KW-0804">Transcription</keyword>
<keyword id="KW-0808">Transferase</keyword>
<accession>Q82T75</accession>
<evidence type="ECO:0000255" key="1">
    <source>
        <dbReference type="HAMAP-Rule" id="MF_01321"/>
    </source>
</evidence>
<organism>
    <name type="scientific">Nitrosomonas europaea (strain ATCC 19718 / CIP 103999 / KCTC 2705 / NBRC 14298)</name>
    <dbReference type="NCBI Taxonomy" id="228410"/>
    <lineage>
        <taxon>Bacteria</taxon>
        <taxon>Pseudomonadati</taxon>
        <taxon>Pseudomonadota</taxon>
        <taxon>Betaproteobacteria</taxon>
        <taxon>Nitrosomonadales</taxon>
        <taxon>Nitrosomonadaceae</taxon>
        <taxon>Nitrosomonas</taxon>
    </lineage>
</organism>
<feature type="chain" id="PRO_0000047931" description="DNA-directed RNA polymerase subunit beta">
    <location>
        <begin position="1"/>
        <end position="1357"/>
    </location>
</feature>
<dbReference type="EC" id="2.7.7.6" evidence="1"/>
<dbReference type="EMBL" id="AL954747">
    <property type="protein sequence ID" value="CAD85957.1"/>
    <property type="molecule type" value="Genomic_DNA"/>
</dbReference>
<dbReference type="RefSeq" id="WP_011112559.1">
    <property type="nucleotide sequence ID" value="NC_004757.1"/>
</dbReference>
<dbReference type="SMR" id="Q82T75"/>
<dbReference type="STRING" id="228410.NE2046"/>
<dbReference type="GeneID" id="87105183"/>
<dbReference type="KEGG" id="neu:NE2046"/>
<dbReference type="eggNOG" id="COG0085">
    <property type="taxonomic scope" value="Bacteria"/>
</dbReference>
<dbReference type="HOGENOM" id="CLU_000524_4_1_4"/>
<dbReference type="OrthoDB" id="9803954at2"/>
<dbReference type="PhylomeDB" id="Q82T75"/>
<dbReference type="Proteomes" id="UP000001416">
    <property type="component" value="Chromosome"/>
</dbReference>
<dbReference type="GO" id="GO:0000428">
    <property type="term" value="C:DNA-directed RNA polymerase complex"/>
    <property type="evidence" value="ECO:0007669"/>
    <property type="project" value="UniProtKB-KW"/>
</dbReference>
<dbReference type="GO" id="GO:0003677">
    <property type="term" value="F:DNA binding"/>
    <property type="evidence" value="ECO:0007669"/>
    <property type="project" value="UniProtKB-UniRule"/>
</dbReference>
<dbReference type="GO" id="GO:0003899">
    <property type="term" value="F:DNA-directed RNA polymerase activity"/>
    <property type="evidence" value="ECO:0007669"/>
    <property type="project" value="UniProtKB-UniRule"/>
</dbReference>
<dbReference type="GO" id="GO:0032549">
    <property type="term" value="F:ribonucleoside binding"/>
    <property type="evidence" value="ECO:0007669"/>
    <property type="project" value="InterPro"/>
</dbReference>
<dbReference type="GO" id="GO:0006351">
    <property type="term" value="P:DNA-templated transcription"/>
    <property type="evidence" value="ECO:0007669"/>
    <property type="project" value="UniProtKB-UniRule"/>
</dbReference>
<dbReference type="CDD" id="cd00653">
    <property type="entry name" value="RNA_pol_B_RPB2"/>
    <property type="match status" value="1"/>
</dbReference>
<dbReference type="FunFam" id="2.40.50.100:FF:000006">
    <property type="entry name" value="DNA-directed RNA polymerase subunit beta"/>
    <property type="match status" value="1"/>
</dbReference>
<dbReference type="FunFam" id="3.90.1110.10:FF:000004">
    <property type="entry name" value="DNA-directed RNA polymerase subunit beta"/>
    <property type="match status" value="1"/>
</dbReference>
<dbReference type="FunFam" id="3.90.1800.10:FF:000001">
    <property type="entry name" value="DNA-directed RNA polymerase subunit beta"/>
    <property type="match status" value="1"/>
</dbReference>
<dbReference type="Gene3D" id="2.40.50.100">
    <property type="match status" value="1"/>
</dbReference>
<dbReference type="Gene3D" id="2.40.50.150">
    <property type="match status" value="1"/>
</dbReference>
<dbReference type="Gene3D" id="3.90.1100.10">
    <property type="match status" value="2"/>
</dbReference>
<dbReference type="Gene3D" id="2.30.150.10">
    <property type="entry name" value="DNA-directed RNA polymerase, beta subunit, external 1 domain"/>
    <property type="match status" value="1"/>
</dbReference>
<dbReference type="Gene3D" id="2.40.270.10">
    <property type="entry name" value="DNA-directed RNA polymerase, subunit 2, domain 6"/>
    <property type="match status" value="1"/>
</dbReference>
<dbReference type="Gene3D" id="3.90.1800.10">
    <property type="entry name" value="RNA polymerase alpha subunit dimerisation domain"/>
    <property type="match status" value="1"/>
</dbReference>
<dbReference type="Gene3D" id="3.90.1110.10">
    <property type="entry name" value="RNA polymerase Rpb2, domain 2"/>
    <property type="match status" value="1"/>
</dbReference>
<dbReference type="HAMAP" id="MF_01321">
    <property type="entry name" value="RNApol_bact_RpoB"/>
    <property type="match status" value="1"/>
</dbReference>
<dbReference type="InterPro" id="IPR042107">
    <property type="entry name" value="DNA-dir_RNA_pol_bsu_ext_1_sf"/>
</dbReference>
<dbReference type="InterPro" id="IPR019462">
    <property type="entry name" value="DNA-dir_RNA_pol_bsu_external_1"/>
</dbReference>
<dbReference type="InterPro" id="IPR015712">
    <property type="entry name" value="DNA-dir_RNA_pol_su2"/>
</dbReference>
<dbReference type="InterPro" id="IPR007120">
    <property type="entry name" value="DNA-dir_RNAP_su2_dom"/>
</dbReference>
<dbReference type="InterPro" id="IPR037033">
    <property type="entry name" value="DNA-dir_RNAP_su2_hyb_sf"/>
</dbReference>
<dbReference type="InterPro" id="IPR010243">
    <property type="entry name" value="RNA_pol_bsu_bac"/>
</dbReference>
<dbReference type="InterPro" id="IPR007121">
    <property type="entry name" value="RNA_pol_bsu_CS"/>
</dbReference>
<dbReference type="InterPro" id="IPR007644">
    <property type="entry name" value="RNA_pol_bsu_protrusion"/>
</dbReference>
<dbReference type="InterPro" id="IPR007642">
    <property type="entry name" value="RNA_pol_Rpb2_2"/>
</dbReference>
<dbReference type="InterPro" id="IPR037034">
    <property type="entry name" value="RNA_pol_Rpb2_2_sf"/>
</dbReference>
<dbReference type="InterPro" id="IPR007645">
    <property type="entry name" value="RNA_pol_Rpb2_3"/>
</dbReference>
<dbReference type="InterPro" id="IPR007641">
    <property type="entry name" value="RNA_pol_Rpb2_7"/>
</dbReference>
<dbReference type="InterPro" id="IPR014724">
    <property type="entry name" value="RNA_pol_RPB2_OB-fold"/>
</dbReference>
<dbReference type="NCBIfam" id="NF001616">
    <property type="entry name" value="PRK00405.1"/>
    <property type="match status" value="1"/>
</dbReference>
<dbReference type="NCBIfam" id="TIGR02013">
    <property type="entry name" value="rpoB"/>
    <property type="match status" value="1"/>
</dbReference>
<dbReference type="PANTHER" id="PTHR20856">
    <property type="entry name" value="DNA-DIRECTED RNA POLYMERASE I SUBUNIT 2"/>
    <property type="match status" value="1"/>
</dbReference>
<dbReference type="Pfam" id="PF04563">
    <property type="entry name" value="RNA_pol_Rpb2_1"/>
    <property type="match status" value="1"/>
</dbReference>
<dbReference type="Pfam" id="PF04561">
    <property type="entry name" value="RNA_pol_Rpb2_2"/>
    <property type="match status" value="2"/>
</dbReference>
<dbReference type="Pfam" id="PF04565">
    <property type="entry name" value="RNA_pol_Rpb2_3"/>
    <property type="match status" value="1"/>
</dbReference>
<dbReference type="Pfam" id="PF10385">
    <property type="entry name" value="RNA_pol_Rpb2_45"/>
    <property type="match status" value="1"/>
</dbReference>
<dbReference type="Pfam" id="PF00562">
    <property type="entry name" value="RNA_pol_Rpb2_6"/>
    <property type="match status" value="1"/>
</dbReference>
<dbReference type="Pfam" id="PF04560">
    <property type="entry name" value="RNA_pol_Rpb2_7"/>
    <property type="match status" value="1"/>
</dbReference>
<dbReference type="SUPFAM" id="SSF64484">
    <property type="entry name" value="beta and beta-prime subunits of DNA dependent RNA-polymerase"/>
    <property type="match status" value="1"/>
</dbReference>
<dbReference type="PROSITE" id="PS01166">
    <property type="entry name" value="RNA_POL_BETA"/>
    <property type="match status" value="1"/>
</dbReference>
<comment type="function">
    <text evidence="1">DNA-dependent RNA polymerase catalyzes the transcription of DNA into RNA using the four ribonucleoside triphosphates as substrates.</text>
</comment>
<comment type="catalytic activity">
    <reaction evidence="1">
        <text>RNA(n) + a ribonucleoside 5'-triphosphate = RNA(n+1) + diphosphate</text>
        <dbReference type="Rhea" id="RHEA:21248"/>
        <dbReference type="Rhea" id="RHEA-COMP:14527"/>
        <dbReference type="Rhea" id="RHEA-COMP:17342"/>
        <dbReference type="ChEBI" id="CHEBI:33019"/>
        <dbReference type="ChEBI" id="CHEBI:61557"/>
        <dbReference type="ChEBI" id="CHEBI:140395"/>
        <dbReference type="EC" id="2.7.7.6"/>
    </reaction>
</comment>
<comment type="subunit">
    <text evidence="1">The RNAP catalytic core consists of 2 alpha, 1 beta, 1 beta' and 1 omega subunit. When a sigma factor is associated with the core the holoenzyme is formed, which can initiate transcription.</text>
</comment>
<comment type="similarity">
    <text evidence="1">Belongs to the RNA polymerase beta chain family.</text>
</comment>
<sequence length="1357" mass="151796">MSYSFAEKKRIRKSFAKRASILPFPFLLATQIQSYTDFLQAEIAPGKRKNQGLQAAFNSVFPIESHSNNARLDFISYMLGSPVFDVKECQQRGLTYAAPLRARVRLTILDKEASKPTVKEVKEQEVYMGEIPLMTDTGSFVVNGTERVIVSQLHRSPGVFFEHDRGKTHSSGKLLFSARIIPYRGSWLDFEFDPKDYVYFRIDRRRKMPVTTLLKAMGYSPAQILADFFEFDHFILVDNKIFFNLIPERLRGELAGFDIVSEDGKVFVQKDKRITAKHVRDLQQANLTKIPVPEEFLLGKILAADLVDKETGEIIALANSEISETLLGRIRQTQSSEISTLFVNDLNYGPYISQTLRIDETTDQMSAQVAIYRMMRPGEPPTEEAVLALFNGLFYSPERYDLSVVGRMKFNRRVGREELTGSTTLSNDDIIDVIKILVELRNGRGEIDDIDHLGNRRVRSVGELAENQFRAGLARVEKAVKERLSQAESENLMPHDFINAKPVSSAIREFFGSSQLSQFMDQTNPLSEVTHKRRISALGPGGLTRERAGFEVRDVHPTHYGRVCPIETPEGPNIGLINSLALYARTNEYGFIETPYRMVRNGRVTEEVVYLSAIEESQYVIAQANANFDQNGVFTDEVVSCRHKNEFTLASRDQIEYVDIAPAQIVSVAASLIPFLEHDDANRALMGSNMQRQAVPCLRAEKPLVGTGIERVVAVHSGTAVRTIRGGVVDYVDASRIVIRVHDAEARAGEVGVDIYNLTKYTRSNQNTNINQRPIVRMGDVLSRDDVIADGASTDLGELALGQNMLIAFMPWNGLNFEDSILISERVVSDDRFTSIHIEELAAVSRDTKLGTEEITADIPNLSERQRARLDESGIVYIGAEVEAGDVLVGKVTPKSETQLTPEEKLLRAIFGEKASDVKDTSLHVPAGISGTVIDVQIFTREGVDRDKRSKQIIADELGRFKKDLADQMRIVEADAFQRAERLLTGKVAAGGPKKLAKNSTITRDYLENVEKHHWFDIRLVDENTSLQLEQIKDSLVQKRKLFDLAFEEKHRKLSQGDELPPGVQKMVKVYIAVKRRLQSGDKMAGRHGNKGVISKIVPIEDMPYMADGTPVDVVLNPLGVPSRMNIGQVLEVHLGWAAKELGKRVNEMLASQRNVSDIRDFLNKIYNNSGKQEDLTSLEDDEVLALARNLSSGVPFATPVFDGAHESEIKQMLKLAGLPESGQTTLYDGRTGEAFDRPVTVGYMHVLKLHHLVDDKMHARSTGPYSLVTQQPLGGKAQFGGQRFGEMEVWALEAYGASYTLQEMLTVKSDDVNGRTKVYESIVKGDHKIDAGMPESFNVLVKEIRSLGLDIDLEEH</sequence>
<gene>
    <name evidence="1" type="primary">rpoB</name>
    <name type="ordered locus">NE2046</name>
</gene>
<reference key="1">
    <citation type="journal article" date="2003" name="J. Bacteriol.">
        <title>Complete genome sequence of the ammonia-oxidizing bacterium and obligate chemolithoautotroph Nitrosomonas europaea.</title>
        <authorList>
            <person name="Chain P."/>
            <person name="Lamerdin J.E."/>
            <person name="Larimer F.W."/>
            <person name="Regala W."/>
            <person name="Lao V."/>
            <person name="Land M.L."/>
            <person name="Hauser L."/>
            <person name="Hooper A.B."/>
            <person name="Klotz M.G."/>
            <person name="Norton J."/>
            <person name="Sayavedra-Soto L.A."/>
            <person name="Arciero D.M."/>
            <person name="Hommes N.G."/>
            <person name="Whittaker M.M."/>
            <person name="Arp D.J."/>
        </authorList>
    </citation>
    <scope>NUCLEOTIDE SEQUENCE [LARGE SCALE GENOMIC DNA]</scope>
    <source>
        <strain>ATCC 19718 / CIP 103999 / KCTC 2705 / NBRC 14298</strain>
    </source>
</reference>
<protein>
    <recommendedName>
        <fullName evidence="1">DNA-directed RNA polymerase subunit beta</fullName>
        <shortName evidence="1">RNAP subunit beta</shortName>
        <ecNumber evidence="1">2.7.7.6</ecNumber>
    </recommendedName>
    <alternativeName>
        <fullName evidence="1">RNA polymerase subunit beta</fullName>
    </alternativeName>
    <alternativeName>
        <fullName evidence="1">Transcriptase subunit beta</fullName>
    </alternativeName>
</protein>
<name>RPOB_NITEU</name>